<reference key="1">
    <citation type="journal article" date="2003" name="Nat. Genet.">
        <title>Comparative analysis of the genome sequences of Bordetella pertussis, Bordetella parapertussis and Bordetella bronchiseptica.</title>
        <authorList>
            <person name="Parkhill J."/>
            <person name="Sebaihia M."/>
            <person name="Preston A."/>
            <person name="Murphy L.D."/>
            <person name="Thomson N.R."/>
            <person name="Harris D.E."/>
            <person name="Holden M.T.G."/>
            <person name="Churcher C.M."/>
            <person name="Bentley S.D."/>
            <person name="Mungall K.L."/>
            <person name="Cerdeno-Tarraga A.-M."/>
            <person name="Temple L."/>
            <person name="James K.D."/>
            <person name="Harris B."/>
            <person name="Quail M.A."/>
            <person name="Achtman M."/>
            <person name="Atkin R."/>
            <person name="Baker S."/>
            <person name="Basham D."/>
            <person name="Bason N."/>
            <person name="Cherevach I."/>
            <person name="Chillingworth T."/>
            <person name="Collins M."/>
            <person name="Cronin A."/>
            <person name="Davis P."/>
            <person name="Doggett J."/>
            <person name="Feltwell T."/>
            <person name="Goble A."/>
            <person name="Hamlin N."/>
            <person name="Hauser H."/>
            <person name="Holroyd S."/>
            <person name="Jagels K."/>
            <person name="Leather S."/>
            <person name="Moule S."/>
            <person name="Norberczak H."/>
            <person name="O'Neil S."/>
            <person name="Ormond D."/>
            <person name="Price C."/>
            <person name="Rabbinowitsch E."/>
            <person name="Rutter S."/>
            <person name="Sanders M."/>
            <person name="Saunders D."/>
            <person name="Seeger K."/>
            <person name="Sharp S."/>
            <person name="Simmonds M."/>
            <person name="Skelton J."/>
            <person name="Squares R."/>
            <person name="Squares S."/>
            <person name="Stevens K."/>
            <person name="Unwin L."/>
            <person name="Whitehead S."/>
            <person name="Barrell B.G."/>
            <person name="Maskell D.J."/>
        </authorList>
    </citation>
    <scope>NUCLEOTIDE SEQUENCE [LARGE SCALE GENOMIC DNA]</scope>
    <source>
        <strain>Tohama I / ATCC BAA-589 / NCTC 13251</strain>
    </source>
</reference>
<comment type="function">
    <text evidence="1">Catalyzes the N-acylation of UDP-3-O-acylglucosamine using 3-hydroxyacyl-ACP as the acyl donor. Is involved in the biosynthesis of lipid A, a phosphorylated glycolipid that anchors the lipopolysaccharide to the outer membrane of the cell.</text>
</comment>
<comment type="catalytic activity">
    <reaction evidence="1">
        <text>a UDP-3-O-[(3R)-3-hydroxyacyl]-alpha-D-glucosamine + a (3R)-hydroxyacyl-[ACP] = a UDP-2-N,3-O-bis[(3R)-3-hydroxyacyl]-alpha-D-glucosamine + holo-[ACP] + H(+)</text>
        <dbReference type="Rhea" id="RHEA:53836"/>
        <dbReference type="Rhea" id="RHEA-COMP:9685"/>
        <dbReference type="Rhea" id="RHEA-COMP:9945"/>
        <dbReference type="ChEBI" id="CHEBI:15378"/>
        <dbReference type="ChEBI" id="CHEBI:64479"/>
        <dbReference type="ChEBI" id="CHEBI:78827"/>
        <dbReference type="ChEBI" id="CHEBI:137740"/>
        <dbReference type="ChEBI" id="CHEBI:137748"/>
        <dbReference type="EC" id="2.3.1.191"/>
    </reaction>
</comment>
<comment type="pathway">
    <text evidence="1">Bacterial outer membrane biogenesis; LPS lipid A biosynthesis.</text>
</comment>
<comment type="subunit">
    <text evidence="1">Homotrimer.</text>
</comment>
<comment type="similarity">
    <text evidence="1">Belongs to the transferase hexapeptide repeat family. LpxD subfamily.</text>
</comment>
<keyword id="KW-0012">Acyltransferase</keyword>
<keyword id="KW-0441">Lipid A biosynthesis</keyword>
<keyword id="KW-0444">Lipid biosynthesis</keyword>
<keyword id="KW-0443">Lipid metabolism</keyword>
<keyword id="KW-1185">Reference proteome</keyword>
<keyword id="KW-0677">Repeat</keyword>
<keyword id="KW-0808">Transferase</keyword>
<dbReference type="EC" id="2.3.1.191" evidence="1"/>
<dbReference type="EMBL" id="BX640415">
    <property type="protein sequence ID" value="CAE41719.1"/>
    <property type="molecule type" value="Genomic_DNA"/>
</dbReference>
<dbReference type="RefSeq" id="NP_880171.1">
    <property type="nucleotide sequence ID" value="NC_002929.2"/>
</dbReference>
<dbReference type="RefSeq" id="WP_010930354.1">
    <property type="nucleotide sequence ID" value="NZ_CP039022.1"/>
</dbReference>
<dbReference type="SMR" id="Q7VYC0"/>
<dbReference type="STRING" id="257313.BP1429"/>
<dbReference type="PaxDb" id="257313-BP1429"/>
<dbReference type="GeneID" id="69601340"/>
<dbReference type="KEGG" id="bpe:BP1429"/>
<dbReference type="PATRIC" id="fig|257313.5.peg.1532"/>
<dbReference type="eggNOG" id="COG1044">
    <property type="taxonomic scope" value="Bacteria"/>
</dbReference>
<dbReference type="HOGENOM" id="CLU_049865_0_1_4"/>
<dbReference type="UniPathway" id="UPA00973"/>
<dbReference type="Proteomes" id="UP000002676">
    <property type="component" value="Chromosome"/>
</dbReference>
<dbReference type="GO" id="GO:0016020">
    <property type="term" value="C:membrane"/>
    <property type="evidence" value="ECO:0007669"/>
    <property type="project" value="GOC"/>
</dbReference>
<dbReference type="GO" id="GO:0016410">
    <property type="term" value="F:N-acyltransferase activity"/>
    <property type="evidence" value="ECO:0007669"/>
    <property type="project" value="InterPro"/>
</dbReference>
<dbReference type="GO" id="GO:0009245">
    <property type="term" value="P:lipid A biosynthetic process"/>
    <property type="evidence" value="ECO:0007669"/>
    <property type="project" value="UniProtKB-UniRule"/>
</dbReference>
<dbReference type="CDD" id="cd03352">
    <property type="entry name" value="LbH_LpxD"/>
    <property type="match status" value="1"/>
</dbReference>
<dbReference type="Gene3D" id="2.160.10.10">
    <property type="entry name" value="Hexapeptide repeat proteins"/>
    <property type="match status" value="1"/>
</dbReference>
<dbReference type="Gene3D" id="3.40.1390.10">
    <property type="entry name" value="MurE/MurF, N-terminal domain"/>
    <property type="match status" value="1"/>
</dbReference>
<dbReference type="HAMAP" id="MF_00523">
    <property type="entry name" value="LpxD"/>
    <property type="match status" value="1"/>
</dbReference>
<dbReference type="InterPro" id="IPR001451">
    <property type="entry name" value="Hexapep"/>
</dbReference>
<dbReference type="InterPro" id="IPR018357">
    <property type="entry name" value="Hexapep_transf_CS"/>
</dbReference>
<dbReference type="InterPro" id="IPR007691">
    <property type="entry name" value="LpxD"/>
</dbReference>
<dbReference type="InterPro" id="IPR011004">
    <property type="entry name" value="Trimer_LpxA-like_sf"/>
</dbReference>
<dbReference type="InterPro" id="IPR020573">
    <property type="entry name" value="UDP_GlcNAc_AcTrfase_non-rep"/>
</dbReference>
<dbReference type="NCBIfam" id="TIGR01853">
    <property type="entry name" value="lipid_A_lpxD"/>
    <property type="match status" value="1"/>
</dbReference>
<dbReference type="NCBIfam" id="NF002060">
    <property type="entry name" value="PRK00892.1"/>
    <property type="match status" value="1"/>
</dbReference>
<dbReference type="PANTHER" id="PTHR43378">
    <property type="entry name" value="UDP-3-O-ACYLGLUCOSAMINE N-ACYLTRANSFERASE"/>
    <property type="match status" value="1"/>
</dbReference>
<dbReference type="PANTHER" id="PTHR43378:SF2">
    <property type="entry name" value="UDP-3-O-ACYLGLUCOSAMINE N-ACYLTRANSFERASE 1, MITOCHONDRIAL-RELATED"/>
    <property type="match status" value="1"/>
</dbReference>
<dbReference type="Pfam" id="PF00132">
    <property type="entry name" value="Hexapep"/>
    <property type="match status" value="2"/>
</dbReference>
<dbReference type="Pfam" id="PF14602">
    <property type="entry name" value="Hexapep_2"/>
    <property type="match status" value="1"/>
</dbReference>
<dbReference type="Pfam" id="PF04613">
    <property type="entry name" value="LpxD"/>
    <property type="match status" value="1"/>
</dbReference>
<dbReference type="SUPFAM" id="SSF51161">
    <property type="entry name" value="Trimeric LpxA-like enzymes"/>
    <property type="match status" value="1"/>
</dbReference>
<dbReference type="PROSITE" id="PS00101">
    <property type="entry name" value="HEXAPEP_TRANSFERASES"/>
    <property type="match status" value="2"/>
</dbReference>
<protein>
    <recommendedName>
        <fullName evidence="1">UDP-3-O-acylglucosamine N-acyltransferase</fullName>
        <ecNumber evidence="1">2.3.1.191</ecNumber>
    </recommendedName>
</protein>
<proteinExistence type="inferred from homology"/>
<name>LPXD_BORPE</name>
<organism>
    <name type="scientific">Bordetella pertussis (strain Tohama I / ATCC BAA-589 / NCTC 13251)</name>
    <dbReference type="NCBI Taxonomy" id="257313"/>
    <lineage>
        <taxon>Bacteria</taxon>
        <taxon>Pseudomonadati</taxon>
        <taxon>Pseudomonadota</taxon>
        <taxon>Betaproteobacteria</taxon>
        <taxon>Burkholderiales</taxon>
        <taxon>Alcaligenaceae</taxon>
        <taxon>Bordetella</taxon>
    </lineage>
</organism>
<accession>Q7VYC0</accession>
<gene>
    <name evidence="1" type="primary">lpxD</name>
    <name type="ordered locus">BP1429</name>
</gene>
<sequence>MPVLLDPENALALDVLLAGIDAQGLDWHLSAPDAADLPRIRGIGTLSSAGNEEISFLSNPRYQNQLATTRAAAVIVTPDVAQARQEQGASGHVLVVCKHPYLLYARLAQWFERASRPAGPAGVHPSAVVDPSAEIDADVRVGAQCVIEAGARIGRGARLGPGCVIGAGSTVGADSLLHPRVTLYAGVHVGERAIIHSGAVLGADGFGFAPDPTLGRGAWGKIPQLGEVRVGNDVEIGANTTIDRGALDDTIVGDGVKLDNQIMVAHNVRIGAHTAIAACVGIAGSTTIGERCTIGGASMLSGHLAIADDVNISGGTAVTSNIAKAGRYTGVYPYAEHSEWQRNAAVIQQLALLRRRLRALERE</sequence>
<evidence type="ECO:0000255" key="1">
    <source>
        <dbReference type="HAMAP-Rule" id="MF_00523"/>
    </source>
</evidence>
<feature type="chain" id="PRO_0000059650" description="UDP-3-O-acylglucosamine N-acyltransferase">
    <location>
        <begin position="1"/>
        <end position="363"/>
    </location>
</feature>
<feature type="active site" description="Proton acceptor" evidence="1">
    <location>
        <position position="266"/>
    </location>
</feature>